<dbReference type="EC" id="2.3.1.-" evidence="2"/>
<dbReference type="EMBL" id="BX284604">
    <property type="protein sequence ID" value="CDK13459.1"/>
    <property type="molecule type" value="Genomic_DNA"/>
</dbReference>
<dbReference type="PIR" id="E88690">
    <property type="entry name" value="E88690"/>
</dbReference>
<dbReference type="RefSeq" id="NP_001293757.1">
    <property type="nucleotide sequence ID" value="NM_001306828.1"/>
</dbReference>
<dbReference type="RefSeq" id="NP_001368393.1">
    <property type="nucleotide sequence ID" value="NM_001380227.3"/>
</dbReference>
<dbReference type="SMR" id="Q20300"/>
<dbReference type="FunCoup" id="Q20300">
    <property type="interactions" value="72"/>
</dbReference>
<dbReference type="STRING" id="6239.F41H10.7.2"/>
<dbReference type="SwissLipids" id="SLP:000000028"/>
<dbReference type="SwissLipids" id="SLP:000000188"/>
<dbReference type="PaxDb" id="6239-F41H10.7"/>
<dbReference type="PeptideAtlas" id="Q20300"/>
<dbReference type="EnsemblMetazoa" id="F41H10.7.1">
    <property type="protein sequence ID" value="F41H10.7.1"/>
    <property type="gene ID" value="WBGene00001243"/>
</dbReference>
<dbReference type="GeneID" id="177320"/>
<dbReference type="UCSC" id="F41H10.7">
    <property type="organism name" value="c. elegans"/>
</dbReference>
<dbReference type="AGR" id="WB:WBGene00001243"/>
<dbReference type="WormBase" id="F41H10.7">
    <property type="protein sequence ID" value="CE49372"/>
    <property type="gene ID" value="WBGene00001243"/>
    <property type="gene designation" value="elo-5"/>
</dbReference>
<dbReference type="eggNOG" id="KOG3072">
    <property type="taxonomic scope" value="Eukaryota"/>
</dbReference>
<dbReference type="GeneTree" id="ENSGT01050000244965"/>
<dbReference type="HOGENOM" id="CLU_048483_1_0_1"/>
<dbReference type="InParanoid" id="Q20300"/>
<dbReference type="OrthoDB" id="10259681at2759"/>
<dbReference type="PhylomeDB" id="Q20300"/>
<dbReference type="Reactome" id="R-CEL-2046105">
    <property type="pathway name" value="Linoleic acid (LA) metabolism"/>
</dbReference>
<dbReference type="Reactome" id="R-CEL-2046106">
    <property type="pathway name" value="alpha-linolenic acid (ALA) metabolism"/>
</dbReference>
<dbReference type="Reactome" id="R-CEL-75876">
    <property type="pathway name" value="Synthesis of very long-chain fatty acyl-CoAs"/>
</dbReference>
<dbReference type="UniPathway" id="UPA00094"/>
<dbReference type="PRO" id="PR:Q20300"/>
<dbReference type="Proteomes" id="UP000001940">
    <property type="component" value="Chromosome IV"/>
</dbReference>
<dbReference type="Bgee" id="WBGene00001243">
    <property type="expression patterns" value="Expressed in larva and 3 other cell types or tissues"/>
</dbReference>
<dbReference type="GO" id="GO:0005789">
    <property type="term" value="C:endoplasmic reticulum membrane"/>
    <property type="evidence" value="ECO:0000318"/>
    <property type="project" value="GO_Central"/>
</dbReference>
<dbReference type="GO" id="GO:0009922">
    <property type="term" value="F:fatty acid elongase activity"/>
    <property type="evidence" value="ECO:0000318"/>
    <property type="project" value="GO_Central"/>
</dbReference>
<dbReference type="GO" id="GO:0034625">
    <property type="term" value="P:fatty acid elongation, monounsaturated fatty acid"/>
    <property type="evidence" value="ECO:0000318"/>
    <property type="project" value="GO_Central"/>
</dbReference>
<dbReference type="GO" id="GO:0034626">
    <property type="term" value="P:fatty acid elongation, polyunsaturated fatty acid"/>
    <property type="evidence" value="ECO:0000318"/>
    <property type="project" value="GO_Central"/>
</dbReference>
<dbReference type="GO" id="GO:0019367">
    <property type="term" value="P:fatty acid elongation, saturated fatty acid"/>
    <property type="evidence" value="ECO:0000318"/>
    <property type="project" value="GO_Central"/>
</dbReference>
<dbReference type="GO" id="GO:1902321">
    <property type="term" value="P:methyl-branched fatty acid biosynthetic process"/>
    <property type="evidence" value="ECO:0000315"/>
    <property type="project" value="UniProtKB"/>
</dbReference>
<dbReference type="GO" id="GO:0030148">
    <property type="term" value="P:sphingolipid biosynthetic process"/>
    <property type="evidence" value="ECO:0000318"/>
    <property type="project" value="GO_Central"/>
</dbReference>
<dbReference type="GO" id="GO:0042761">
    <property type="term" value="P:very long-chain fatty acid biosynthetic process"/>
    <property type="evidence" value="ECO:0000318"/>
    <property type="project" value="GO_Central"/>
</dbReference>
<dbReference type="InterPro" id="IPR002076">
    <property type="entry name" value="ELO_fam"/>
</dbReference>
<dbReference type="PANTHER" id="PTHR11157:SF29">
    <property type="entry name" value="ELONGATION OF LONG CHAIN FATTY ACIDS PROTEIN 5"/>
    <property type="match status" value="1"/>
</dbReference>
<dbReference type="PANTHER" id="PTHR11157">
    <property type="entry name" value="FATTY ACID ACYL TRANSFERASE-RELATED"/>
    <property type="match status" value="1"/>
</dbReference>
<dbReference type="Pfam" id="PF01151">
    <property type="entry name" value="ELO"/>
    <property type="match status" value="1"/>
</dbReference>
<evidence type="ECO:0000255" key="1"/>
<evidence type="ECO:0000269" key="2">
    <source>
    </source>
</evidence>
<evidence type="ECO:0000303" key="3">
    <source>
    </source>
</evidence>
<evidence type="ECO:0000305" key="4"/>
<evidence type="ECO:0000312" key="5">
    <source>
        <dbReference type="WormBase" id="F41H10.7"/>
    </source>
</evidence>
<sequence>MMDQILGTNFTYEGAKEVARGLEGFSAKLAVGYIATIFGLKYYMKDRKAFDLSTPLNIWNGILSTFSLLGFLFTFPTLLSVIRKDGFSHTYSHVSELYTDSTSGYWIFLWVISKIPELLDTVFIVLRKRPLIFMHWYHHALTGYYALVCYHEDAVHMVWVVWMNYIIHAFMYGYYLLKSLKVPIPPSVAQAITTSQMVQFAVAIFAQVHVSYKHYVEGVEGLAYSFRGTAIGFFMLTTYFYLWIQFYKEHYLKNGGKKYNLAKDQAKTQTKKAN</sequence>
<name>ELO5_CAEEL</name>
<organism>
    <name type="scientific">Caenorhabditis elegans</name>
    <dbReference type="NCBI Taxonomy" id="6239"/>
    <lineage>
        <taxon>Eukaryota</taxon>
        <taxon>Metazoa</taxon>
        <taxon>Ecdysozoa</taxon>
        <taxon>Nematoda</taxon>
        <taxon>Chromadorea</taxon>
        <taxon>Rhabditida</taxon>
        <taxon>Rhabditina</taxon>
        <taxon>Rhabditomorpha</taxon>
        <taxon>Rhabditoidea</taxon>
        <taxon>Rhabditidae</taxon>
        <taxon>Peloderinae</taxon>
        <taxon>Caenorhabditis</taxon>
    </lineage>
</organism>
<comment type="function">
    <text evidence="2">Catalyzes the first and rate-limiting reaction of the four reactions that constitute the long-chain fatty acids elongation cycle. Uses malonyl-CoA to add 2 carbons per cycle to the chain of long-chain fatty acids. Condensing enzyme required for the formation of isopentadecanoate (C15iso) and isoheptadecanoate (C17iso), both play critical roles in animal development and growth.</text>
</comment>
<comment type="catalytic activity">
    <reaction evidence="2">
        <text>11-methyldodecanoyl-CoA + malonyl-CoA + H(+) = 3-oxoisopentadecanoyl-CoA + CO2 + CoA</text>
        <dbReference type="Rhea" id="RHEA:35291"/>
        <dbReference type="ChEBI" id="CHEBI:15378"/>
        <dbReference type="ChEBI" id="CHEBI:16526"/>
        <dbReference type="ChEBI" id="CHEBI:57287"/>
        <dbReference type="ChEBI" id="CHEBI:57384"/>
        <dbReference type="ChEBI" id="CHEBI:71427"/>
        <dbReference type="ChEBI" id="CHEBI:71430"/>
    </reaction>
    <physiologicalReaction direction="left-to-right" evidence="2">
        <dbReference type="Rhea" id="RHEA:35292"/>
    </physiologicalReaction>
</comment>
<comment type="catalytic activity">
    <reaction evidence="2">
        <text>isopentadecanoyl-CoA + malonyl-CoA + H(+) = 3-oxoisoheptadecanoyl-CoA + CO2 + CoA</text>
        <dbReference type="Rhea" id="RHEA:35335"/>
        <dbReference type="ChEBI" id="CHEBI:15378"/>
        <dbReference type="ChEBI" id="CHEBI:16526"/>
        <dbReference type="ChEBI" id="CHEBI:57287"/>
        <dbReference type="ChEBI" id="CHEBI:57384"/>
        <dbReference type="ChEBI" id="CHEBI:70827"/>
        <dbReference type="ChEBI" id="CHEBI:71445"/>
    </reaction>
    <physiologicalReaction direction="left-to-right" evidence="2">
        <dbReference type="Rhea" id="RHEA:35336"/>
    </physiologicalReaction>
</comment>
<comment type="pathway">
    <text evidence="2">Lipid metabolism; fatty acid biosynthesis.</text>
</comment>
<comment type="subcellular location">
    <subcellularLocation>
        <location evidence="4">Membrane</location>
        <topology evidence="4">Multi-pass membrane protein</topology>
    </subcellularLocation>
</comment>
<comment type="tissue specificity">
    <text evidence="2">Expressed in the gut and unidentified head cells.</text>
</comment>
<comment type="disruption phenotype">
    <text evidence="2">Loss of function induces an egg-laying defect from the second day of adulthood with progeny arrested at the larval stage L1. The small larvae maintain morphological integrity and survive for up to 3 to 4 days. Animals had reduced levels of isoheptadecanoate (C17iso) and isopentadecanoate (C15iso). The phenotype could be fully suppressed by feeding with C17iso and partially suppressed by feeding with C15iso.</text>
</comment>
<comment type="similarity">
    <text evidence="4">Belongs to the ELO family.</text>
</comment>
<gene>
    <name evidence="5" type="primary">elo-5</name>
    <name evidence="5" type="ORF">F41H10.7</name>
</gene>
<protein>
    <recommendedName>
        <fullName evidence="4">Long chain fatty acid elongase 5</fullName>
        <shortName evidence="3">ELO-5</shortName>
        <ecNumber evidence="2">2.3.1.-</ecNumber>
    </recommendedName>
    <alternativeName>
        <fullName>3-keto acyl-CoA synthase elo-5</fullName>
    </alternativeName>
    <alternativeName>
        <fullName>Elongation of long chain fatty acids protein 5</fullName>
    </alternativeName>
    <alternativeName>
        <fullName>Long-chain 3-oxoacyl-CoA synthase 5</fullName>
        <shortName>CEELO5</shortName>
    </alternativeName>
    <alternativeName>
        <fullName>Monomethyl branched-chain fatty acid elongase 5</fullName>
        <shortName>mmBCFA elongase 5</shortName>
    </alternativeName>
</protein>
<reference key="1">
    <citation type="journal article" date="1998" name="Science">
        <title>Genome sequence of the nematode C. elegans: a platform for investigating biology.</title>
        <authorList>
            <consortium name="The C. elegans sequencing consortium"/>
        </authorList>
    </citation>
    <scope>NUCLEOTIDE SEQUENCE [LARGE SCALE GENOMIC DNA]</scope>
    <source>
        <strain>Bristol N2</strain>
    </source>
</reference>
<reference key="2">
    <citation type="journal article" date="2004" name="PLoS Biol.">
        <title>Monomethyl branched-chain fatty acids play an essential role in Caenorhabditis elegans development.</title>
        <authorList>
            <person name="Kniazeva M."/>
            <person name="Crawford Q.T."/>
            <person name="Seiber M."/>
            <person name="Wang C.Y."/>
            <person name="Han M."/>
        </authorList>
    </citation>
    <scope>FUNCTION</scope>
    <scope>CATALYTIC ACTIVITY</scope>
    <scope>PATHWAY</scope>
    <scope>TISSUE SPECIFICITY</scope>
    <scope>DISRUPTION PHENOTYPE</scope>
</reference>
<keyword id="KW-0275">Fatty acid biosynthesis</keyword>
<keyword id="KW-0276">Fatty acid metabolism</keyword>
<keyword id="KW-0444">Lipid biosynthesis</keyword>
<keyword id="KW-0443">Lipid metabolism</keyword>
<keyword id="KW-0472">Membrane</keyword>
<keyword id="KW-1185">Reference proteome</keyword>
<keyword id="KW-0808">Transferase</keyword>
<keyword id="KW-0812">Transmembrane</keyword>
<keyword id="KW-1133">Transmembrane helix</keyword>
<proteinExistence type="evidence at protein level"/>
<feature type="chain" id="PRO_0000421276" description="Long chain fatty acid elongase 5">
    <location>
        <begin position="1"/>
        <end position="274"/>
    </location>
</feature>
<feature type="topological domain" description="Extracellular" evidence="4">
    <location>
        <begin position="1"/>
        <end position="23"/>
    </location>
</feature>
<feature type="transmembrane region" description="Helical" evidence="1">
    <location>
        <begin position="24"/>
        <end position="44"/>
    </location>
</feature>
<feature type="topological domain" description="Cytoplasmic" evidence="4">
    <location>
        <begin position="45"/>
        <end position="61"/>
    </location>
</feature>
<feature type="transmembrane region" description="Helical" evidence="1">
    <location>
        <begin position="62"/>
        <end position="82"/>
    </location>
</feature>
<feature type="topological domain" description="Extracellular" evidence="4">
    <location>
        <begin position="83"/>
        <end position="105"/>
    </location>
</feature>
<feature type="transmembrane region" description="Helical" evidence="1">
    <location>
        <begin position="106"/>
        <end position="126"/>
    </location>
</feature>
<feature type="topological domain" description="Cytoplasmic" evidence="4">
    <location>
        <begin position="127"/>
        <end position="129"/>
    </location>
</feature>
<feature type="transmembrane region" description="Helical" evidence="1">
    <location>
        <begin position="130"/>
        <end position="150"/>
    </location>
</feature>
<feature type="topological domain" description="Extracellular" evidence="4">
    <location>
        <begin position="151"/>
        <end position="156"/>
    </location>
</feature>
<feature type="transmembrane region" description="Helical" evidence="1">
    <location>
        <begin position="157"/>
        <end position="177"/>
    </location>
</feature>
<feature type="topological domain" description="Cytoplasmic" evidence="4">
    <location>
        <begin position="178"/>
        <end position="187"/>
    </location>
</feature>
<feature type="transmembrane region" description="Helical" evidence="1">
    <location>
        <begin position="188"/>
        <end position="208"/>
    </location>
</feature>
<feature type="topological domain" description="Extracellular" evidence="4">
    <location>
        <begin position="209"/>
        <end position="227"/>
    </location>
</feature>
<feature type="transmembrane region" description="Helical" evidence="1">
    <location>
        <begin position="228"/>
        <end position="248"/>
    </location>
</feature>
<feature type="topological domain" description="Cytoplasmic" evidence="4">
    <location>
        <begin position="249"/>
        <end position="274"/>
    </location>
</feature>
<accession>Q20300</accession>
<accession>V6CLH1</accession>